<organism>
    <name type="scientific">Homo sapiens</name>
    <name type="common">Human</name>
    <dbReference type="NCBI Taxonomy" id="9606"/>
    <lineage>
        <taxon>Eukaryota</taxon>
        <taxon>Metazoa</taxon>
        <taxon>Chordata</taxon>
        <taxon>Craniata</taxon>
        <taxon>Vertebrata</taxon>
        <taxon>Euteleostomi</taxon>
        <taxon>Mammalia</taxon>
        <taxon>Eutheria</taxon>
        <taxon>Euarchontoglires</taxon>
        <taxon>Primates</taxon>
        <taxon>Haplorrhini</taxon>
        <taxon>Catarrhini</taxon>
        <taxon>Hominidae</taxon>
        <taxon>Homo</taxon>
    </lineage>
</organism>
<accession>Q86T90</accession>
<accession>Q05DL0</accession>
<accession>Q49AG6</accession>
<accession>Q9P2L8</accession>
<comment type="function">
    <text evidence="4">Competes with SMC1 for binding to SMC3. May affect the availability of SMC3 to engage in the formation of multimeric protein complexes.</text>
</comment>
<comment type="subunit">
    <text evidence="4">Interacts (via N- and C-terminal domains) with SMC3 (via central hinge region).</text>
</comment>
<comment type="interaction">
    <interactant intactId="EBI-3437878">
        <id>Q86T90</id>
    </interactant>
    <interactant intactId="EBI-17286414">
        <id>A2BDD9</id>
        <label>AMOT</label>
    </interactant>
    <organismsDiffer>false</organismsDiffer>
    <experiments>3</experiments>
</comment>
<comment type="interaction">
    <interactant intactId="EBI-3437878">
        <id>Q86T90</id>
    </interactant>
    <interactant intactId="EBI-11954519">
        <id>Q49AR9</id>
        <label>ANKS1A</label>
    </interactant>
    <organismsDiffer>false</organismsDiffer>
    <experiments>3</experiments>
</comment>
<comment type="interaction">
    <interactant intactId="EBI-3437878">
        <id>Q86T90</id>
    </interactant>
    <interactant intactId="EBI-1047414">
        <id>Q9H1Y0</id>
        <label>ATG5</label>
    </interactant>
    <organismsDiffer>false</organismsDiffer>
    <experiments>3</experiments>
</comment>
<comment type="interaction">
    <interactant intactId="EBI-3437878">
        <id>Q86T90</id>
    </interactant>
    <interactant intactId="EBI-358049">
        <id>Q13895</id>
        <label>BYSL</label>
    </interactant>
    <organismsDiffer>false</organismsDiffer>
    <experiments>3</experiments>
</comment>
<comment type="interaction">
    <interactant intactId="EBI-3437878">
        <id>Q86T90</id>
    </interactant>
    <interactant intactId="EBI-11530605">
        <id>Q9H257-2</id>
        <label>CARD9</label>
    </interactant>
    <organismsDiffer>false</organismsDiffer>
    <experiments>3</experiments>
</comment>
<comment type="interaction">
    <interactant intactId="EBI-3437878">
        <id>Q86T90</id>
    </interactant>
    <interactant intactId="EBI-10961312">
        <id>Q8IYE1</id>
        <label>CCDC13</label>
    </interactant>
    <organismsDiffer>false</organismsDiffer>
    <experiments>3</experiments>
</comment>
<comment type="interaction">
    <interactant intactId="EBI-3437878">
        <id>Q86T90</id>
    </interactant>
    <interactant intactId="EBI-12165781">
        <id>Q96LX7-5</id>
        <label>CCDC17</label>
    </interactant>
    <organismsDiffer>false</organismsDiffer>
    <experiments>3</experiments>
</comment>
<comment type="interaction">
    <interactant intactId="EBI-3437878">
        <id>Q86T90</id>
    </interactant>
    <interactant intactId="EBI-10175300">
        <id>Q8TD31-3</id>
        <label>CCHCR1</label>
    </interactant>
    <organismsDiffer>false</organismsDiffer>
    <experiments>3</experiments>
</comment>
<comment type="interaction">
    <interactant intactId="EBI-3437878">
        <id>Q86T90</id>
    </interactant>
    <interactant intactId="EBI-10250303">
        <id>Q6IPU0</id>
        <label>CENPP</label>
    </interactant>
    <organismsDiffer>false</organismsDiffer>
    <experiments>3</experiments>
</comment>
<comment type="interaction">
    <interactant intactId="EBI-3437878">
        <id>Q86T90</id>
    </interactant>
    <interactant intactId="EBI-1811944">
        <id>O15078</id>
        <label>CEP290</label>
    </interactant>
    <organismsDiffer>false</organismsDiffer>
    <experiments>3</experiments>
</comment>
<comment type="interaction">
    <interactant intactId="EBI-3437878">
        <id>Q86T90</id>
    </interactant>
    <interactant intactId="EBI-749051">
        <id>Q8IYR0</id>
        <label>CFAP206</label>
    </interactant>
    <organismsDiffer>false</organismsDiffer>
    <experiments>3</experiments>
</comment>
<comment type="interaction">
    <interactant intactId="EBI-3437878">
        <id>Q86T90</id>
    </interactant>
    <interactant intactId="EBI-11980535">
        <id>P51800-3</id>
        <label>CLCNKA</label>
    </interactant>
    <organismsDiffer>false</organismsDiffer>
    <experiments>3</experiments>
</comment>
<comment type="interaction">
    <interactant intactId="EBI-3437878">
        <id>Q86T90</id>
    </interactant>
    <interactant intactId="EBI-359063">
        <id>P53618</id>
        <label>COPB1</label>
    </interactant>
    <organismsDiffer>false</organismsDiffer>
    <experiments>3</experiments>
</comment>
<comment type="interaction">
    <interactant intactId="EBI-3437878">
        <id>Q86T90</id>
    </interactant>
    <interactant intactId="EBI-11521003">
        <id>Q9UIA0</id>
        <label>CYTH4</label>
    </interactant>
    <organismsDiffer>false</organismsDiffer>
    <experiments>3</experiments>
</comment>
<comment type="interaction">
    <interactant intactId="EBI-3437878">
        <id>Q86T90</id>
    </interactant>
    <interactant intactId="EBI-745369">
        <id>Q9H4E7</id>
        <label>DEF6</label>
    </interactant>
    <organismsDiffer>false</organismsDiffer>
    <experiments>3</experiments>
</comment>
<comment type="interaction">
    <interactant intactId="EBI-3437878">
        <id>Q86T90</id>
    </interactant>
    <interactant intactId="EBI-769261">
        <id>Q96JC9</id>
        <label>EAF1</label>
    </interactant>
    <organismsDiffer>false</organismsDiffer>
    <experiments>3</experiments>
</comment>
<comment type="interaction">
    <interactant intactId="EBI-3437878">
        <id>Q86T90</id>
    </interactant>
    <interactant intactId="EBI-747840">
        <id>Q96G04</id>
        <label>EEF2KMT</label>
    </interactant>
    <organismsDiffer>false</organismsDiffer>
    <experiments>3</experiments>
</comment>
<comment type="interaction">
    <interactant intactId="EBI-3437878">
        <id>Q86T90</id>
    </interactant>
    <interactant intactId="EBI-744099">
        <id>Q9H0I2</id>
        <label>ENKD1</label>
    </interactant>
    <organismsDiffer>false</organismsDiffer>
    <experiments>3</experiments>
</comment>
<comment type="interaction">
    <interactant intactId="EBI-3437878">
        <id>Q86T90</id>
    </interactant>
    <interactant intactId="EBI-719941">
        <id>Q3B820</id>
        <label>FAM161A</label>
    </interactant>
    <organismsDiffer>false</organismsDiffer>
    <experiments>3</experiments>
</comment>
<comment type="interaction">
    <interactant intactId="EBI-3437878">
        <id>Q86T90</id>
    </interactant>
    <interactant intactId="EBI-7225287">
        <id>Q96MY7</id>
        <label>FAM161B</label>
    </interactant>
    <organismsDiffer>false</organismsDiffer>
    <experiments>3</experiments>
</comment>
<comment type="interaction">
    <interactant intactId="EBI-3437878">
        <id>Q86T90</id>
    </interactant>
    <interactant intactId="EBI-6164177">
        <id>Q92805</id>
        <label>GOLGA1</label>
    </interactant>
    <organismsDiffer>false</organismsDiffer>
    <experiments>3</experiments>
</comment>
<comment type="interaction">
    <interactant intactId="EBI-3437878">
        <id>Q86T90</id>
    </interactant>
    <interactant intactId="EBI-12066130">
        <id>Q96LB3-2</id>
        <label>IFT74</label>
    </interactant>
    <organismsDiffer>false</organismsDiffer>
    <experiments>3</experiments>
</comment>
<comment type="interaction">
    <interactant intactId="EBI-3437878">
        <id>Q86T90</id>
    </interactant>
    <interactant intactId="EBI-8639312">
        <id>P25800</id>
        <label>LMO1</label>
    </interactant>
    <organismsDiffer>false</organismsDiffer>
    <experiments>3</experiments>
</comment>
<comment type="interaction">
    <interactant intactId="EBI-3437878">
        <id>Q86T90</id>
    </interactant>
    <interactant intactId="EBI-739832">
        <id>Q8TBB1</id>
        <label>LNX1</label>
    </interactant>
    <organismsDiffer>false</organismsDiffer>
    <experiments>3</experiments>
</comment>
<comment type="interaction">
    <interactant intactId="EBI-3437878">
        <id>Q86T90</id>
    </interactant>
    <interactant intactId="EBI-2548751">
        <id>Q8TD10</id>
        <label>MIPOL1</label>
    </interactant>
    <organismsDiffer>false</organismsDiffer>
    <experiments>3</experiments>
</comment>
<comment type="interaction">
    <interactant intactId="EBI-3437878">
        <id>Q86T90</id>
    </interactant>
    <interactant intactId="EBI-744593">
        <id>Q96QG7</id>
        <label>MTMR9</label>
    </interactant>
    <organismsDiffer>false</organismsDiffer>
    <experiments>3</experiments>
</comment>
<comment type="interaction">
    <interactant intactId="EBI-3437878">
        <id>Q86T90</id>
    </interactant>
    <interactant intactId="EBI-11750983">
        <id>Q9HC98-4</id>
        <label>NEK6</label>
    </interactant>
    <organismsDiffer>false</organismsDiffer>
    <experiments>3</experiments>
</comment>
<comment type="interaction">
    <interactant intactId="EBI-3437878">
        <id>Q86T90</id>
    </interactant>
    <interactant intactId="EBI-79165">
        <id>Q9NRD5</id>
        <label>PICK1</label>
    </interactant>
    <organismsDiffer>false</organismsDiffer>
    <experiments>3</experiments>
</comment>
<comment type="interaction">
    <interactant intactId="EBI-3437878">
        <id>Q86T90</id>
    </interactant>
    <interactant intactId="EBI-602382">
        <id>Q16512</id>
        <label>PKN1</label>
    </interactant>
    <organismsDiffer>false</organismsDiffer>
    <experiments>3</experiments>
</comment>
<comment type="interaction">
    <interactant intactId="EBI-3437878">
        <id>Q86T90</id>
    </interactant>
    <interactant intactId="EBI-1383852">
        <id>P54646</id>
        <label>PRKAA2</label>
    </interactant>
    <organismsDiffer>false</organismsDiffer>
    <experiments>3</experiments>
</comment>
<comment type="interaction">
    <interactant intactId="EBI-3437878">
        <id>Q86T90</id>
    </interactant>
    <interactant intactId="EBI-346882">
        <id>Q99816</id>
        <label>TSG101</label>
    </interactant>
    <organismsDiffer>false</organismsDiffer>
    <experiments>3</experiments>
</comment>
<comment type="interaction">
    <interactant intactId="EBI-3437878">
        <id>Q86T90</id>
    </interactant>
    <interactant intactId="EBI-744794">
        <id>Q9BZW7</id>
        <label>TSGA10</label>
    </interactant>
    <organismsDiffer>false</organismsDiffer>
    <experiments>3</experiments>
</comment>
<comment type="interaction">
    <interactant intactId="EBI-3437878">
        <id>Q86T90</id>
    </interactant>
    <interactant intactId="EBI-8994397">
        <id>Q5T7W7</id>
        <label>TSTD2</label>
    </interactant>
    <organismsDiffer>false</organismsDiffer>
    <experiments>3</experiments>
</comment>
<comment type="interaction">
    <interactant intactId="EBI-3437878">
        <id>Q86T90</id>
    </interactant>
    <interactant intactId="EBI-9090990">
        <id>Q5W5X9-3</id>
        <label>TTC23</label>
    </interactant>
    <organismsDiffer>false</organismsDiffer>
    <experiments>3</experiments>
</comment>
<comment type="interaction">
    <interactant intactId="EBI-3437878">
        <id>Q86T90</id>
    </interactant>
    <interactant intactId="EBI-359793">
        <id>P40222</id>
        <label>TXLNA</label>
    </interactant>
    <organismsDiffer>false</organismsDiffer>
    <experiments>3</experiments>
</comment>
<comment type="interaction">
    <interactant intactId="EBI-3437878">
        <id>Q86T90</id>
    </interactant>
    <interactant intactId="EBI-6116822">
        <id>Q8N3L3</id>
        <label>TXLNB</label>
    </interactant>
    <organismsDiffer>false</organismsDiffer>
    <experiments>3</experiments>
</comment>
<comment type="interaction">
    <interactant intactId="EBI-3437878">
        <id>Q86T90</id>
    </interactant>
    <interactant intactId="EBI-10183064">
        <id>Q8N5A5-2</id>
        <label>ZGPAT</label>
    </interactant>
    <organismsDiffer>false</organismsDiffer>
    <experiments>5</experiments>
</comment>
<comment type="interaction">
    <interactant intactId="EBI-3437878">
        <id>Q86T90</id>
    </interactant>
    <interactant intactId="EBI-740727">
        <id>Q8TAU3</id>
        <label>ZNF417</label>
    </interactant>
    <organismsDiffer>false</organismsDiffer>
    <experiments>3</experiments>
</comment>
<comment type="alternative products">
    <event type="alternative splicing"/>
    <isoform>
        <id>Q86T90-1</id>
        <name>1</name>
        <sequence type="displayed"/>
    </isoform>
    <isoform>
        <id>Q86T90-2</id>
        <name>2</name>
        <sequence type="described" ref="VSP_029810"/>
    </isoform>
    <isoform>
        <id>Q86T90-3</id>
        <name>3</name>
        <sequence type="described" ref="VSP_029809 VSP_029811 VSP_029814 VSP_029815"/>
    </isoform>
    <isoform>
        <id>Q86T90-4</id>
        <name>4</name>
        <sequence type="described" ref="VSP_029809 VSP_029812 VSP_029813"/>
    </isoform>
</comment>
<comment type="tissue specificity">
    <text evidence="4">Widely expressed.</text>
</comment>
<comment type="sequence caution" evidence="8">
    <conflict type="erroneous initiation">
        <sequence resource="EMBL-CDS" id="BAA92566"/>
    </conflict>
</comment>
<protein>
    <recommendedName>
        <fullName evidence="7">Protein hinderin</fullName>
    </recommendedName>
</protein>
<proteinExistence type="evidence at protein level"/>
<reference key="1">
    <citation type="journal article" date="2000" name="DNA Res.">
        <title>Prediction of the coding sequences of unidentified human genes. XVI. The complete sequences of 150 new cDNA clones from brain which code for large proteins in vitro.</title>
        <authorList>
            <person name="Nagase T."/>
            <person name="Kikuno R."/>
            <person name="Ishikawa K."/>
            <person name="Hirosawa M."/>
            <person name="Ohara O."/>
        </authorList>
    </citation>
    <scope>NUCLEOTIDE SEQUENCE [LARGE SCALE MRNA] (ISOFORM 2)</scope>
    <source>
        <tissue>Brain</tissue>
    </source>
</reference>
<reference key="2">
    <citation type="journal article" date="2002" name="DNA Res.">
        <title>Construction of expression-ready cDNA clones for KIAA genes: manual curation of 330 KIAA cDNA clones.</title>
        <authorList>
            <person name="Nakajima D."/>
            <person name="Okazaki N."/>
            <person name="Yamakawa H."/>
            <person name="Kikuno R."/>
            <person name="Ohara O."/>
            <person name="Nagase T."/>
        </authorList>
    </citation>
    <scope>SEQUENCE REVISION</scope>
</reference>
<reference key="3">
    <citation type="journal article" date="2007" name="BMC Genomics">
        <title>The full-ORF clone resource of the German cDNA consortium.</title>
        <authorList>
            <person name="Bechtel S."/>
            <person name="Rosenfelder H."/>
            <person name="Duda A."/>
            <person name="Schmidt C.P."/>
            <person name="Ernst U."/>
            <person name="Wellenreuther R."/>
            <person name="Mehrle A."/>
            <person name="Schuster C."/>
            <person name="Bahr A."/>
            <person name="Bloecker H."/>
            <person name="Heubner D."/>
            <person name="Hoerlein A."/>
            <person name="Michel G."/>
            <person name="Wedler H."/>
            <person name="Koehrer K."/>
            <person name="Ottenwaelder B."/>
            <person name="Poustka A."/>
            <person name="Wiemann S."/>
            <person name="Schupp I."/>
        </authorList>
    </citation>
    <scope>NUCLEOTIDE SEQUENCE [LARGE SCALE MRNA] (ISOFORM 1)</scope>
    <source>
        <tissue>Spinal cord</tissue>
    </source>
</reference>
<reference key="4">
    <citation type="journal article" date="2005" name="Nature">
        <title>DNA sequence and analysis of human chromosome 18.</title>
        <authorList>
            <person name="Nusbaum C."/>
            <person name="Zody M.C."/>
            <person name="Borowsky M.L."/>
            <person name="Kamal M."/>
            <person name="Kodira C.D."/>
            <person name="Taylor T.D."/>
            <person name="Whittaker C.A."/>
            <person name="Chang J.L."/>
            <person name="Cuomo C.A."/>
            <person name="Dewar K."/>
            <person name="FitzGerald M.G."/>
            <person name="Yang X."/>
            <person name="Abouelleil A."/>
            <person name="Allen N.R."/>
            <person name="Anderson S."/>
            <person name="Bloom T."/>
            <person name="Bugalter B."/>
            <person name="Butler J."/>
            <person name="Cook A."/>
            <person name="DeCaprio D."/>
            <person name="Engels R."/>
            <person name="Garber M."/>
            <person name="Gnirke A."/>
            <person name="Hafez N."/>
            <person name="Hall J.L."/>
            <person name="Norman C.H."/>
            <person name="Itoh T."/>
            <person name="Jaffe D.B."/>
            <person name="Kuroki Y."/>
            <person name="Lehoczky J."/>
            <person name="Lui A."/>
            <person name="Macdonald P."/>
            <person name="Mauceli E."/>
            <person name="Mikkelsen T.S."/>
            <person name="Naylor J.W."/>
            <person name="Nicol R."/>
            <person name="Nguyen C."/>
            <person name="Noguchi H."/>
            <person name="O'Leary S.B."/>
            <person name="Piqani B."/>
            <person name="Smith C.L."/>
            <person name="Talamas J.A."/>
            <person name="Topham K."/>
            <person name="Totoki Y."/>
            <person name="Toyoda A."/>
            <person name="Wain H.M."/>
            <person name="Young S.K."/>
            <person name="Zeng Q."/>
            <person name="Zimmer A.R."/>
            <person name="Fujiyama A."/>
            <person name="Hattori M."/>
            <person name="Birren B.W."/>
            <person name="Sakaki Y."/>
            <person name="Lander E.S."/>
        </authorList>
    </citation>
    <scope>NUCLEOTIDE SEQUENCE [LARGE SCALE GENOMIC DNA]</scope>
</reference>
<reference key="5">
    <citation type="journal article" date="2004" name="Genome Res.">
        <title>The status, quality, and expansion of the NIH full-length cDNA project: the Mammalian Gene Collection (MGC).</title>
        <authorList>
            <consortium name="The MGC Project Team"/>
        </authorList>
    </citation>
    <scope>NUCLEOTIDE SEQUENCE [LARGE SCALE MRNA] (ISOFORMS 3 AND 4)</scope>
    <source>
        <tissue>Brain</tissue>
        <tissue>Eye</tissue>
    </source>
</reference>
<reference key="6">
    <citation type="journal article" date="2005" name="BMC Cell Biol.">
        <title>Hinderin, a five-domains protein including coiled-coil motifs that binds to SMC3.</title>
        <authorList>
            <person name="Patel C.A."/>
            <person name="Ghiselli G."/>
        </authorList>
    </citation>
    <scope>INTERACTION WITH SMC3</scope>
    <scope>TISSUE SPECIFICITY</scope>
    <scope>FUNCTION</scope>
</reference>
<reference key="7">
    <citation type="journal article" date="2009" name="Anal. Chem.">
        <title>Lys-N and trypsin cover complementary parts of the phosphoproteome in a refined SCX-based approach.</title>
        <authorList>
            <person name="Gauci S."/>
            <person name="Helbig A.O."/>
            <person name="Slijper M."/>
            <person name="Krijgsveld J."/>
            <person name="Heck A.J."/>
            <person name="Mohammed S."/>
        </authorList>
    </citation>
    <scope>IDENTIFICATION BY MASS SPECTROMETRY [LARGE SCALE ANALYSIS]</scope>
</reference>
<reference key="8">
    <citation type="journal article" date="2009" name="Sci. Signal.">
        <title>Quantitative phosphoproteomic analysis of T cell receptor signaling reveals system-wide modulation of protein-protein interactions.</title>
        <authorList>
            <person name="Mayya V."/>
            <person name="Lundgren D.H."/>
            <person name="Hwang S.-I."/>
            <person name="Rezaul K."/>
            <person name="Wu L."/>
            <person name="Eng J.K."/>
            <person name="Rodionov V."/>
            <person name="Han D.K."/>
        </authorList>
    </citation>
    <scope>IDENTIFICATION BY MASS SPECTROMETRY [LARGE SCALE ANALYSIS]</scope>
    <source>
        <tissue>Leukemic T-cell</tissue>
    </source>
</reference>
<reference key="9">
    <citation type="journal article" date="2013" name="J. Proteome Res.">
        <title>Toward a comprehensive characterization of a human cancer cell phosphoproteome.</title>
        <authorList>
            <person name="Zhou H."/>
            <person name="Di Palma S."/>
            <person name="Preisinger C."/>
            <person name="Peng M."/>
            <person name="Polat A.N."/>
            <person name="Heck A.J."/>
            <person name="Mohammed S."/>
        </authorList>
    </citation>
    <scope>PHOSPHORYLATION [LARGE SCALE ANALYSIS] AT SER-179 AND SER-490</scope>
    <scope>IDENTIFICATION BY MASS SPECTROMETRY [LARGE SCALE ANALYSIS]</scope>
    <source>
        <tissue>Erythroleukemia</tissue>
    </source>
</reference>
<evidence type="ECO:0000250" key="1">
    <source>
        <dbReference type="UniProtKB" id="Q6NZK5"/>
    </source>
</evidence>
<evidence type="ECO:0000255" key="2"/>
<evidence type="ECO:0000256" key="3">
    <source>
        <dbReference type="SAM" id="MobiDB-lite"/>
    </source>
</evidence>
<evidence type="ECO:0000269" key="4">
    <source>
    </source>
</evidence>
<evidence type="ECO:0000303" key="5">
    <source>
    </source>
</evidence>
<evidence type="ECO:0000303" key="6">
    <source>
    </source>
</evidence>
<evidence type="ECO:0000303" key="7">
    <source>
    </source>
</evidence>
<evidence type="ECO:0000305" key="8"/>
<evidence type="ECO:0007744" key="9">
    <source>
    </source>
</evidence>
<name>K1328_HUMAN</name>
<dbReference type="EMBL" id="AB037749">
    <property type="protein sequence ID" value="BAA92566.2"/>
    <property type="status" value="ALT_INIT"/>
    <property type="molecule type" value="mRNA"/>
</dbReference>
<dbReference type="EMBL" id="AL832625">
    <property type="protein sequence ID" value="CAD89947.1"/>
    <property type="molecule type" value="mRNA"/>
</dbReference>
<dbReference type="EMBL" id="AC009854">
    <property type="status" value="NOT_ANNOTATED_CDS"/>
    <property type="molecule type" value="Genomic_DNA"/>
</dbReference>
<dbReference type="EMBL" id="AC015961">
    <property type="status" value="NOT_ANNOTATED_CDS"/>
    <property type="molecule type" value="Genomic_DNA"/>
</dbReference>
<dbReference type="EMBL" id="AC016493">
    <property type="status" value="NOT_ANNOTATED_CDS"/>
    <property type="molecule type" value="Genomic_DNA"/>
</dbReference>
<dbReference type="EMBL" id="BC008670">
    <property type="protein sequence ID" value="AAH08670.1"/>
    <property type="molecule type" value="mRNA"/>
</dbReference>
<dbReference type="EMBL" id="BC037903">
    <property type="protein sequence ID" value="AAH37903.1"/>
    <property type="molecule type" value="mRNA"/>
</dbReference>
<dbReference type="CCDS" id="CCDS45855.1">
    <molecule id="Q86T90-1"/>
</dbReference>
<dbReference type="RefSeq" id="NP_065827.1">
    <molecule id="Q86T90-1"/>
    <property type="nucleotide sequence ID" value="NM_020776.3"/>
</dbReference>
<dbReference type="RefSeq" id="XP_005258374.1">
    <molecule id="Q86T90-2"/>
    <property type="nucleotide sequence ID" value="XM_005258317.4"/>
</dbReference>
<dbReference type="RefSeq" id="XP_047293635.1">
    <molecule id="Q86T90-2"/>
    <property type="nucleotide sequence ID" value="XM_047437679.1"/>
</dbReference>
<dbReference type="RefSeq" id="XP_054174849.1">
    <molecule id="Q86T90-2"/>
    <property type="nucleotide sequence ID" value="XM_054318874.1"/>
</dbReference>
<dbReference type="RefSeq" id="XP_054174850.1">
    <molecule id="Q86T90-2"/>
    <property type="nucleotide sequence ID" value="XM_054318875.1"/>
</dbReference>
<dbReference type="SMR" id="Q86T90"/>
<dbReference type="BioGRID" id="121595">
    <property type="interactions" value="47"/>
</dbReference>
<dbReference type="FunCoup" id="Q86T90">
    <property type="interactions" value="1661"/>
</dbReference>
<dbReference type="IntAct" id="Q86T90">
    <property type="interactions" value="54"/>
</dbReference>
<dbReference type="MINT" id="Q86T90"/>
<dbReference type="STRING" id="9606.ENSP00000280020"/>
<dbReference type="iPTMnet" id="Q86T90"/>
<dbReference type="PhosphoSitePlus" id="Q86T90"/>
<dbReference type="BioMuta" id="KIAA1328"/>
<dbReference type="DMDM" id="296434548"/>
<dbReference type="jPOST" id="Q86T90"/>
<dbReference type="MassIVE" id="Q86T90"/>
<dbReference type="PaxDb" id="9606-ENSP00000280020"/>
<dbReference type="PeptideAtlas" id="Q86T90"/>
<dbReference type="ProteomicsDB" id="69669">
    <molecule id="Q86T90-1"/>
</dbReference>
<dbReference type="ProteomicsDB" id="69670">
    <molecule id="Q86T90-2"/>
</dbReference>
<dbReference type="ProteomicsDB" id="69671">
    <molecule id="Q86T90-3"/>
</dbReference>
<dbReference type="ProteomicsDB" id="69672">
    <molecule id="Q86T90-4"/>
</dbReference>
<dbReference type="Antibodypedia" id="49207">
    <property type="antibodies" value="21 antibodies from 9 providers"/>
</dbReference>
<dbReference type="DNASU" id="57536"/>
<dbReference type="Ensembl" id="ENST00000280020.10">
    <molecule id="Q86T90-1"/>
    <property type="protein sequence ID" value="ENSP00000280020.5"/>
    <property type="gene ID" value="ENSG00000150477.15"/>
</dbReference>
<dbReference type="Ensembl" id="ENST00000586135.1">
    <molecule id="Q86T90-3"/>
    <property type="protein sequence ID" value="ENSP00000467507.1"/>
    <property type="gene ID" value="ENSG00000150477.15"/>
</dbReference>
<dbReference type="Ensembl" id="ENST00000586501.1">
    <molecule id="Q86T90-4"/>
    <property type="protein sequence ID" value="ENSP00000470371.1"/>
    <property type="gene ID" value="ENSG00000150477.15"/>
</dbReference>
<dbReference type="Ensembl" id="ENST00000591619.5">
    <molecule id="Q86T90-2"/>
    <property type="protein sequence ID" value="ENSP00000465550.1"/>
    <property type="gene ID" value="ENSG00000150477.15"/>
</dbReference>
<dbReference type="GeneID" id="57536"/>
<dbReference type="KEGG" id="hsa:57536"/>
<dbReference type="MANE-Select" id="ENST00000280020.10">
    <property type="protein sequence ID" value="ENSP00000280020.5"/>
    <property type="RefSeq nucleotide sequence ID" value="NM_020776.3"/>
    <property type="RefSeq protein sequence ID" value="NP_065827.1"/>
</dbReference>
<dbReference type="UCSC" id="uc002kzz.4">
    <molecule id="Q86T90-1"/>
    <property type="organism name" value="human"/>
</dbReference>
<dbReference type="AGR" id="HGNC:29248"/>
<dbReference type="CTD" id="57536"/>
<dbReference type="DisGeNET" id="57536"/>
<dbReference type="GeneCards" id="KIAA1328"/>
<dbReference type="HGNC" id="HGNC:29248">
    <property type="gene designation" value="KIAA1328"/>
</dbReference>
<dbReference type="HPA" id="ENSG00000150477">
    <property type="expression patterns" value="Low tissue specificity"/>
</dbReference>
<dbReference type="MIM" id="616480">
    <property type="type" value="gene"/>
</dbReference>
<dbReference type="neXtProt" id="NX_Q86T90"/>
<dbReference type="OpenTargets" id="ENSG00000150477"/>
<dbReference type="PharmGKB" id="PA134875219"/>
<dbReference type="VEuPathDB" id="HostDB:ENSG00000150477"/>
<dbReference type="eggNOG" id="ENOG502QTY3">
    <property type="taxonomic scope" value="Eukaryota"/>
</dbReference>
<dbReference type="GeneTree" id="ENSGT00390000011152"/>
<dbReference type="HOGENOM" id="CLU_033814_1_0_1"/>
<dbReference type="InParanoid" id="Q86T90"/>
<dbReference type="OMA" id="TTCHYES"/>
<dbReference type="OrthoDB" id="5972940at2759"/>
<dbReference type="PAN-GO" id="Q86T90">
    <property type="GO annotations" value="0 GO annotations based on evolutionary models"/>
</dbReference>
<dbReference type="PhylomeDB" id="Q86T90"/>
<dbReference type="TreeFam" id="TF332088"/>
<dbReference type="PathwayCommons" id="Q86T90"/>
<dbReference type="SignaLink" id="Q86T90"/>
<dbReference type="BioGRID-ORCS" id="57536">
    <property type="hits" value="11 hits in 1163 CRISPR screens"/>
</dbReference>
<dbReference type="ChiTaRS" id="KIAA1328">
    <property type="organism name" value="human"/>
</dbReference>
<dbReference type="GenomeRNAi" id="57536"/>
<dbReference type="Pharos" id="Q86T90">
    <property type="development level" value="Tdark"/>
</dbReference>
<dbReference type="PRO" id="PR:Q86T90"/>
<dbReference type="Proteomes" id="UP000005640">
    <property type="component" value="Chromosome 18"/>
</dbReference>
<dbReference type="RNAct" id="Q86T90">
    <property type="molecule type" value="protein"/>
</dbReference>
<dbReference type="Bgee" id="ENSG00000150477">
    <property type="expression patterns" value="Expressed in calcaneal tendon and 115 other cell types or tissues"/>
</dbReference>
<dbReference type="ExpressionAtlas" id="Q86T90">
    <property type="expression patterns" value="baseline and differential"/>
</dbReference>
<dbReference type="InterPro" id="IPR032736">
    <property type="entry name" value="Hinderin"/>
</dbReference>
<dbReference type="PANTHER" id="PTHR28375">
    <property type="entry name" value="PROTEIN HINDERIN"/>
    <property type="match status" value="1"/>
</dbReference>
<dbReference type="PANTHER" id="PTHR28375:SF1">
    <property type="entry name" value="PROTEIN HINDERIN"/>
    <property type="match status" value="1"/>
</dbReference>
<dbReference type="Pfam" id="PF15369">
    <property type="entry name" value="KIAA1328"/>
    <property type="match status" value="1"/>
</dbReference>
<feature type="chain" id="PRO_0000312298" description="Protein hinderin">
    <location>
        <begin position="1"/>
        <end position="577"/>
    </location>
</feature>
<feature type="region of interest" description="Disordered" evidence="3">
    <location>
        <begin position="251"/>
        <end position="282"/>
    </location>
</feature>
<feature type="region of interest" description="Disordered" evidence="3">
    <location>
        <begin position="425"/>
        <end position="444"/>
    </location>
</feature>
<feature type="region of interest" description="Disordered" evidence="3">
    <location>
        <begin position="449"/>
        <end position="492"/>
    </location>
</feature>
<feature type="region of interest" description="Disordered" evidence="3">
    <location>
        <begin position="520"/>
        <end position="540"/>
    </location>
</feature>
<feature type="coiled-coil region" evidence="2">
    <location>
        <begin position="91"/>
        <end position="167"/>
    </location>
</feature>
<feature type="coiled-coil region" evidence="2">
    <location>
        <begin position="358"/>
        <end position="402"/>
    </location>
</feature>
<feature type="compositionally biased region" description="Basic and acidic residues" evidence="3">
    <location>
        <begin position="254"/>
        <end position="263"/>
    </location>
</feature>
<feature type="compositionally biased region" description="Basic and acidic residues" evidence="3">
    <location>
        <begin position="449"/>
        <end position="468"/>
    </location>
</feature>
<feature type="modified residue" description="Phosphoserine" evidence="1">
    <location>
        <position position="21"/>
    </location>
</feature>
<feature type="modified residue" description="Phosphoserine" evidence="9">
    <location>
        <position position="179"/>
    </location>
</feature>
<feature type="modified residue" description="Phosphoserine" evidence="9">
    <location>
        <position position="490"/>
    </location>
</feature>
<feature type="modified residue" description="Phosphoserine" evidence="1">
    <location>
        <position position="521"/>
    </location>
</feature>
<feature type="splice variant" id="VSP_029809" description="In isoform 3 and isoform 4." evidence="6">
    <location>
        <begin position="1"/>
        <end position="284"/>
    </location>
</feature>
<feature type="splice variant" id="VSP_029810" description="In isoform 2." evidence="5">
    <original>MADVAGPSRPSAAAFWSRDF</original>
    <variation>MPDNIIVFSFMFSCVV</variation>
    <location>
        <begin position="1"/>
        <end position="20"/>
    </location>
</feature>
<feature type="splice variant" id="VSP_029811" description="In isoform 3." evidence="6">
    <original>C</original>
    <variation>WLKAQALFKSRELVAEKQLTKPQELKLDMNGSDSGPS</variation>
    <location>
        <position position="411"/>
    </location>
</feature>
<feature type="splice variant" id="VSP_029812" description="In isoform 4." evidence="6">
    <original>LL</original>
    <variation>SE</variation>
    <location>
        <begin position="412"/>
        <end position="413"/>
    </location>
</feature>
<feature type="splice variant" id="VSP_029813" description="In isoform 4." evidence="6">
    <location>
        <begin position="414"/>
        <end position="577"/>
    </location>
</feature>
<feature type="splice variant" id="VSP_029814" description="In isoform 3." evidence="6">
    <original>YETSLLDLVQSLSPNSAPK</original>
    <variation>PGISTKICFLSNHFFILFS</variation>
    <location>
        <begin position="509"/>
        <end position="527"/>
    </location>
</feature>
<feature type="splice variant" id="VSP_029815" description="In isoform 3." evidence="6">
    <location>
        <begin position="528"/>
        <end position="577"/>
    </location>
</feature>
<feature type="sequence variant" id="VAR_037483" description="In dbSNP:rs12326301.">
    <original>R</original>
    <variation>C</variation>
    <location>
        <position position="383"/>
    </location>
</feature>
<feature type="sequence conflict" description="In Ref. 3; CAD89947." evidence="8" ref="3">
    <original>A</original>
    <variation>V</variation>
    <location>
        <position position="62"/>
    </location>
</feature>
<feature type="sequence conflict" description="In Ref. 3; CAD89947." evidence="8" ref="3">
    <original>V</original>
    <variation>A</variation>
    <location>
        <position position="76"/>
    </location>
</feature>
<gene>
    <name type="primary">KIAA1328</name>
</gene>
<keyword id="KW-0025">Alternative splicing</keyword>
<keyword id="KW-0175">Coiled coil</keyword>
<keyword id="KW-0597">Phosphoprotein</keyword>
<keyword id="KW-1267">Proteomics identification</keyword>
<keyword id="KW-1185">Reference proteome</keyword>
<sequence length="577" mass="65373">MADVAGPSRPSAAAFWSRDFSDEEQSVVYVPGISAEGNVRSRHKLMSPKADVKLKTSRVTDASISMESLKGTGDSVDEQNSCRGEIKSASLKDLCLEDKRRIANLIKELARVSEEKEVTEERLKAEQESFEKKIRQLEEQNELIIKEREALQLQYRECQELLSLYQKYLSEQQEKLTMSLSELGAARMQEQQVSSRKSTLQCSSVELDGSYLSIARPQTYYQTKQRPKSAVQDSASESLIAFRNNSLKPVTLHHPKDDLDKIPSETTTCNCESPGRKPAVPTEKMPQEELHMKECPHLKPTPSQCCGHRLAADRVHDSHPTNMTPQHPKTHPESCSYCRLSWASLVHGGGALQPIETLKKQISEDRKQQLMLQKMELEIEKERLQHLLAQQETKLLLKQQQLHQSRLDYNCLLKSNCDGWLLGTSSSIKKHQDPPNSGENRKERKTVGFHSHMKDDAQWSCQKKDTCRPQRGTVTGVRKDASTSPMPTGSLKDFVTTASPSLQHTTSRYETSLLDLVQSLSPNSAPKPQRYPSREAGAWNHGTFRLSPLKSTRKKMGMHRTPEELEENQILEDIFFI</sequence>